<dbReference type="EC" id="2.7.4.9" evidence="1"/>
<dbReference type="EMBL" id="CP000936">
    <property type="protein sequence ID" value="ACA35838.1"/>
    <property type="molecule type" value="Genomic_DNA"/>
</dbReference>
<dbReference type="RefSeq" id="WP_000033396.1">
    <property type="nucleotide sequence ID" value="NC_010380.1"/>
</dbReference>
<dbReference type="SMR" id="B1IBA2"/>
<dbReference type="KEGG" id="spv:SPH_1043"/>
<dbReference type="HOGENOM" id="CLU_049131_0_2_9"/>
<dbReference type="Proteomes" id="UP000002163">
    <property type="component" value="Chromosome"/>
</dbReference>
<dbReference type="GO" id="GO:0005829">
    <property type="term" value="C:cytosol"/>
    <property type="evidence" value="ECO:0007669"/>
    <property type="project" value="TreeGrafter"/>
</dbReference>
<dbReference type="GO" id="GO:0005524">
    <property type="term" value="F:ATP binding"/>
    <property type="evidence" value="ECO:0007669"/>
    <property type="project" value="UniProtKB-UniRule"/>
</dbReference>
<dbReference type="GO" id="GO:0004798">
    <property type="term" value="F:dTMP kinase activity"/>
    <property type="evidence" value="ECO:0007669"/>
    <property type="project" value="UniProtKB-UniRule"/>
</dbReference>
<dbReference type="GO" id="GO:0006233">
    <property type="term" value="P:dTDP biosynthetic process"/>
    <property type="evidence" value="ECO:0007669"/>
    <property type="project" value="InterPro"/>
</dbReference>
<dbReference type="GO" id="GO:0006235">
    <property type="term" value="P:dTTP biosynthetic process"/>
    <property type="evidence" value="ECO:0007669"/>
    <property type="project" value="UniProtKB-UniRule"/>
</dbReference>
<dbReference type="GO" id="GO:0006227">
    <property type="term" value="P:dUDP biosynthetic process"/>
    <property type="evidence" value="ECO:0007669"/>
    <property type="project" value="TreeGrafter"/>
</dbReference>
<dbReference type="CDD" id="cd01672">
    <property type="entry name" value="TMPK"/>
    <property type="match status" value="1"/>
</dbReference>
<dbReference type="FunFam" id="3.40.50.300:FF:000225">
    <property type="entry name" value="Thymidylate kinase"/>
    <property type="match status" value="1"/>
</dbReference>
<dbReference type="Gene3D" id="3.40.50.300">
    <property type="entry name" value="P-loop containing nucleotide triphosphate hydrolases"/>
    <property type="match status" value="1"/>
</dbReference>
<dbReference type="HAMAP" id="MF_00165">
    <property type="entry name" value="Thymidylate_kinase"/>
    <property type="match status" value="1"/>
</dbReference>
<dbReference type="InterPro" id="IPR027417">
    <property type="entry name" value="P-loop_NTPase"/>
</dbReference>
<dbReference type="InterPro" id="IPR039430">
    <property type="entry name" value="Thymidylate_kin-like_dom"/>
</dbReference>
<dbReference type="InterPro" id="IPR018095">
    <property type="entry name" value="Thymidylate_kin_CS"/>
</dbReference>
<dbReference type="InterPro" id="IPR018094">
    <property type="entry name" value="Thymidylate_kinase"/>
</dbReference>
<dbReference type="NCBIfam" id="TIGR00041">
    <property type="entry name" value="DTMP_kinase"/>
    <property type="match status" value="1"/>
</dbReference>
<dbReference type="PANTHER" id="PTHR10344">
    <property type="entry name" value="THYMIDYLATE KINASE"/>
    <property type="match status" value="1"/>
</dbReference>
<dbReference type="PANTHER" id="PTHR10344:SF4">
    <property type="entry name" value="UMP-CMP KINASE 2, MITOCHONDRIAL"/>
    <property type="match status" value="1"/>
</dbReference>
<dbReference type="Pfam" id="PF02223">
    <property type="entry name" value="Thymidylate_kin"/>
    <property type="match status" value="1"/>
</dbReference>
<dbReference type="SUPFAM" id="SSF52540">
    <property type="entry name" value="P-loop containing nucleoside triphosphate hydrolases"/>
    <property type="match status" value="1"/>
</dbReference>
<dbReference type="PROSITE" id="PS01331">
    <property type="entry name" value="THYMIDYLATE_KINASE"/>
    <property type="match status" value="1"/>
</dbReference>
<organism>
    <name type="scientific">Streptococcus pneumoniae (strain Hungary19A-6)</name>
    <dbReference type="NCBI Taxonomy" id="487214"/>
    <lineage>
        <taxon>Bacteria</taxon>
        <taxon>Bacillati</taxon>
        <taxon>Bacillota</taxon>
        <taxon>Bacilli</taxon>
        <taxon>Lactobacillales</taxon>
        <taxon>Streptococcaceae</taxon>
        <taxon>Streptococcus</taxon>
    </lineage>
</organism>
<reference key="1">
    <citation type="journal article" date="2010" name="Genome Biol.">
        <title>Structure and dynamics of the pan-genome of Streptococcus pneumoniae and closely related species.</title>
        <authorList>
            <person name="Donati C."/>
            <person name="Hiller N.L."/>
            <person name="Tettelin H."/>
            <person name="Muzzi A."/>
            <person name="Croucher N.J."/>
            <person name="Angiuoli S.V."/>
            <person name="Oggioni M."/>
            <person name="Dunning Hotopp J.C."/>
            <person name="Hu F.Z."/>
            <person name="Riley D.R."/>
            <person name="Covacci A."/>
            <person name="Mitchell T.J."/>
            <person name="Bentley S.D."/>
            <person name="Kilian M."/>
            <person name="Ehrlich G.D."/>
            <person name="Rappuoli R."/>
            <person name="Moxon E.R."/>
            <person name="Masignani V."/>
        </authorList>
    </citation>
    <scope>NUCLEOTIDE SEQUENCE [LARGE SCALE GENOMIC DNA]</scope>
    <source>
        <strain>Hungary19A-6</strain>
    </source>
</reference>
<sequence length="212" mass="23336">MSKGFLVSLEGPEGAGKTSVLEALLPILEVKGVKVLTTREPGGVLIGEKIREVILDPSHTQMDAKTELLLYIASRRQHLVEKVLPALEAGKLVIMDRFIDSSVAYQGFGRGLDIEAIDWLNQFATDGLKPDLTLYFDIEVEEGLARIAANSDREVNRLDLEGLDLHKKVRQGYLSLLEKEGNRIVKIDASLPLEQVVETTKAVLFDGMGLAK</sequence>
<comment type="function">
    <text evidence="1">Phosphorylation of dTMP to form dTDP in both de novo and salvage pathways of dTTP synthesis.</text>
</comment>
<comment type="catalytic activity">
    <reaction evidence="1">
        <text>dTMP + ATP = dTDP + ADP</text>
        <dbReference type="Rhea" id="RHEA:13517"/>
        <dbReference type="ChEBI" id="CHEBI:30616"/>
        <dbReference type="ChEBI" id="CHEBI:58369"/>
        <dbReference type="ChEBI" id="CHEBI:63528"/>
        <dbReference type="ChEBI" id="CHEBI:456216"/>
        <dbReference type="EC" id="2.7.4.9"/>
    </reaction>
</comment>
<comment type="similarity">
    <text evidence="1">Belongs to the thymidylate kinase family.</text>
</comment>
<evidence type="ECO:0000255" key="1">
    <source>
        <dbReference type="HAMAP-Rule" id="MF_00165"/>
    </source>
</evidence>
<accession>B1IBA2</accession>
<keyword id="KW-0067">ATP-binding</keyword>
<keyword id="KW-0418">Kinase</keyword>
<keyword id="KW-0545">Nucleotide biosynthesis</keyword>
<keyword id="KW-0547">Nucleotide-binding</keyword>
<keyword id="KW-0808">Transferase</keyword>
<protein>
    <recommendedName>
        <fullName evidence="1">Thymidylate kinase</fullName>
        <ecNumber evidence="1">2.7.4.9</ecNumber>
    </recommendedName>
    <alternativeName>
        <fullName evidence="1">dTMP kinase</fullName>
    </alternativeName>
</protein>
<feature type="chain" id="PRO_1000097432" description="Thymidylate kinase">
    <location>
        <begin position="1"/>
        <end position="212"/>
    </location>
</feature>
<feature type="binding site" evidence="1">
    <location>
        <begin position="11"/>
        <end position="18"/>
    </location>
    <ligand>
        <name>ATP</name>
        <dbReference type="ChEBI" id="CHEBI:30616"/>
    </ligand>
</feature>
<gene>
    <name evidence="1" type="primary">tmk</name>
    <name type="ordered locus">SPH_1043</name>
</gene>
<proteinExistence type="inferred from homology"/>
<name>KTHY_STRPI</name>